<comment type="function">
    <text evidence="1">Cleaves presequences (transit peptides) from chloroplastic protein precursors. Initially recognizes a precursor by binding to the C-terminus of its transit peptide and then removes the transit peptide in a single endoproteolytic step. In a next step, pursues the cleavage of transit peptide to a subfragment form.</text>
</comment>
<comment type="cofactor">
    <cofactor evidence="1">
        <name>Zn(2+)</name>
        <dbReference type="ChEBI" id="CHEBI:29105"/>
    </cofactor>
    <text evidence="1">Binds 1 zinc ion per subunit.</text>
</comment>
<comment type="subcellular location">
    <subcellularLocation>
        <location evidence="1">Plastid</location>
        <location evidence="1">Chloroplast stroma</location>
    </subcellularLocation>
</comment>
<comment type="alternative products">
    <event type="alternative splicing"/>
    <isoform>
        <id>Q69TY5-1</id>
        <name>1</name>
        <sequence type="displayed"/>
    </isoform>
    <isoform>
        <id>Q69TY5-2</id>
        <name>2</name>
        <sequence type="described" ref="VSP_058158"/>
    </isoform>
</comment>
<comment type="similarity">
    <text evidence="2">Belongs to the peptidase M16 family.</text>
</comment>
<comment type="sequence caution" evidence="2">
    <conflict type="erroneous gene model prediction">
        <sequence resource="EMBL-CDS" id="BAD35692"/>
    </conflict>
</comment>
<comment type="sequence caution" evidence="2">
    <conflict type="erroneous gene model prediction">
        <sequence resource="EMBL-CDS" id="BAD37737"/>
    </conflict>
</comment>
<comment type="sequence caution" evidence="2">
    <conflict type="erroneous gene model prediction">
        <sequence resource="EMBL-CDS" id="BAF20026"/>
    </conflict>
</comment>
<comment type="sequence caution" evidence="2">
    <conflict type="erroneous gene model prediction">
        <sequence resource="EMBL-CDS" id="BAS98693"/>
    </conflict>
</comment>
<comment type="sequence caution" evidence="2">
    <conflict type="erroneous gene model prediction">
        <sequence resource="EMBL-CDS" id="BAS98694"/>
    </conflict>
</comment>
<comment type="sequence caution" evidence="2">
    <conflict type="erroneous gene model prediction">
        <sequence resource="EMBL-CDS" id="EEE66044"/>
    </conflict>
</comment>
<accession>Q69TY5</accession>
<accession>A0A0P0WZ97</accession>
<accession>B7ECD6</accession>
<accession>B9FQ02</accession>
<accession>Q0DAU7</accession>
<reference key="1">
    <citation type="journal article" date="2005" name="Nature">
        <title>The map-based sequence of the rice genome.</title>
        <authorList>
            <consortium name="International rice genome sequencing project (IRGSP)"/>
        </authorList>
    </citation>
    <scope>NUCLEOTIDE SEQUENCE [LARGE SCALE GENOMIC DNA]</scope>
    <source>
        <strain>cv. Nipponbare</strain>
    </source>
</reference>
<reference key="2">
    <citation type="journal article" date="2008" name="Nucleic Acids Res.">
        <title>The rice annotation project database (RAP-DB): 2008 update.</title>
        <authorList>
            <consortium name="The rice annotation project (RAP)"/>
        </authorList>
    </citation>
    <scope>GENOME REANNOTATION</scope>
    <source>
        <strain>cv. Nipponbare</strain>
    </source>
</reference>
<reference key="3">
    <citation type="journal article" date="2013" name="Rice">
        <title>Improvement of the Oryza sativa Nipponbare reference genome using next generation sequence and optical map data.</title>
        <authorList>
            <person name="Kawahara Y."/>
            <person name="de la Bastide M."/>
            <person name="Hamilton J.P."/>
            <person name="Kanamori H."/>
            <person name="McCombie W.R."/>
            <person name="Ouyang S."/>
            <person name="Schwartz D.C."/>
            <person name="Tanaka T."/>
            <person name="Wu J."/>
            <person name="Zhou S."/>
            <person name="Childs K.L."/>
            <person name="Davidson R.M."/>
            <person name="Lin H."/>
            <person name="Quesada-Ocampo L."/>
            <person name="Vaillancourt B."/>
            <person name="Sakai H."/>
            <person name="Lee S.S."/>
            <person name="Kim J."/>
            <person name="Numa H."/>
            <person name="Itoh T."/>
            <person name="Buell C.R."/>
            <person name="Matsumoto T."/>
        </authorList>
    </citation>
    <scope>GENOME REANNOTATION</scope>
    <source>
        <strain>cv. Nipponbare</strain>
    </source>
</reference>
<reference key="4">
    <citation type="journal article" date="2005" name="PLoS Biol.">
        <title>The genomes of Oryza sativa: a history of duplications.</title>
        <authorList>
            <person name="Yu J."/>
            <person name="Wang J."/>
            <person name="Lin W."/>
            <person name="Li S."/>
            <person name="Li H."/>
            <person name="Zhou J."/>
            <person name="Ni P."/>
            <person name="Dong W."/>
            <person name="Hu S."/>
            <person name="Zeng C."/>
            <person name="Zhang J."/>
            <person name="Zhang Y."/>
            <person name="Li R."/>
            <person name="Xu Z."/>
            <person name="Li S."/>
            <person name="Li X."/>
            <person name="Zheng H."/>
            <person name="Cong L."/>
            <person name="Lin L."/>
            <person name="Yin J."/>
            <person name="Geng J."/>
            <person name="Li G."/>
            <person name="Shi J."/>
            <person name="Liu J."/>
            <person name="Lv H."/>
            <person name="Li J."/>
            <person name="Wang J."/>
            <person name="Deng Y."/>
            <person name="Ran L."/>
            <person name="Shi X."/>
            <person name="Wang X."/>
            <person name="Wu Q."/>
            <person name="Li C."/>
            <person name="Ren X."/>
            <person name="Wang J."/>
            <person name="Wang X."/>
            <person name="Li D."/>
            <person name="Liu D."/>
            <person name="Zhang X."/>
            <person name="Ji Z."/>
            <person name="Zhao W."/>
            <person name="Sun Y."/>
            <person name="Zhang Z."/>
            <person name="Bao J."/>
            <person name="Han Y."/>
            <person name="Dong L."/>
            <person name="Ji J."/>
            <person name="Chen P."/>
            <person name="Wu S."/>
            <person name="Liu J."/>
            <person name="Xiao Y."/>
            <person name="Bu D."/>
            <person name="Tan J."/>
            <person name="Yang L."/>
            <person name="Ye C."/>
            <person name="Zhang J."/>
            <person name="Xu J."/>
            <person name="Zhou Y."/>
            <person name="Yu Y."/>
            <person name="Zhang B."/>
            <person name="Zhuang S."/>
            <person name="Wei H."/>
            <person name="Liu B."/>
            <person name="Lei M."/>
            <person name="Yu H."/>
            <person name="Li Y."/>
            <person name="Xu H."/>
            <person name="Wei S."/>
            <person name="He X."/>
            <person name="Fang L."/>
            <person name="Zhang Z."/>
            <person name="Zhang Y."/>
            <person name="Huang X."/>
            <person name="Su Z."/>
            <person name="Tong W."/>
            <person name="Li J."/>
            <person name="Tong Z."/>
            <person name="Li S."/>
            <person name="Ye J."/>
            <person name="Wang L."/>
            <person name="Fang L."/>
            <person name="Lei T."/>
            <person name="Chen C.-S."/>
            <person name="Chen H.-C."/>
            <person name="Xu Z."/>
            <person name="Li H."/>
            <person name="Huang H."/>
            <person name="Zhang F."/>
            <person name="Xu H."/>
            <person name="Li N."/>
            <person name="Zhao C."/>
            <person name="Li S."/>
            <person name="Dong L."/>
            <person name="Huang Y."/>
            <person name="Li L."/>
            <person name="Xi Y."/>
            <person name="Qi Q."/>
            <person name="Li W."/>
            <person name="Zhang B."/>
            <person name="Hu W."/>
            <person name="Zhang Y."/>
            <person name="Tian X."/>
            <person name="Jiao Y."/>
            <person name="Liang X."/>
            <person name="Jin J."/>
            <person name="Gao L."/>
            <person name="Zheng W."/>
            <person name="Hao B."/>
            <person name="Liu S.-M."/>
            <person name="Wang W."/>
            <person name="Yuan L."/>
            <person name="Cao M."/>
            <person name="McDermott J."/>
            <person name="Samudrala R."/>
            <person name="Wang J."/>
            <person name="Wong G.K.-S."/>
            <person name="Yang H."/>
        </authorList>
    </citation>
    <scope>NUCLEOTIDE SEQUENCE [LARGE SCALE GENOMIC DNA]</scope>
    <source>
        <strain>cv. Nipponbare</strain>
    </source>
</reference>
<reference key="5">
    <citation type="journal article" date="2003" name="Science">
        <title>Collection, mapping, and annotation of over 28,000 cDNA clones from japonica rice.</title>
        <authorList>
            <consortium name="The rice full-length cDNA consortium"/>
        </authorList>
    </citation>
    <scope>NUCLEOTIDE SEQUENCE [LARGE SCALE MRNA] (ISOFORM 2)</scope>
    <source>
        <strain>cv. Nipponbare</strain>
    </source>
</reference>
<organism>
    <name type="scientific">Oryza sativa subsp. japonica</name>
    <name type="common">Rice</name>
    <dbReference type="NCBI Taxonomy" id="39947"/>
    <lineage>
        <taxon>Eukaryota</taxon>
        <taxon>Viridiplantae</taxon>
        <taxon>Streptophyta</taxon>
        <taxon>Embryophyta</taxon>
        <taxon>Tracheophyta</taxon>
        <taxon>Spermatophyta</taxon>
        <taxon>Magnoliopsida</taxon>
        <taxon>Liliopsida</taxon>
        <taxon>Poales</taxon>
        <taxon>Poaceae</taxon>
        <taxon>BOP clade</taxon>
        <taxon>Oryzoideae</taxon>
        <taxon>Oryzeae</taxon>
        <taxon>Oryzinae</taxon>
        <taxon>Oryza</taxon>
        <taxon>Oryza sativa</taxon>
    </lineage>
</organism>
<feature type="transit peptide" description="Chloroplast" evidence="1">
    <location>
        <begin position="1"/>
        <end position="136"/>
    </location>
</feature>
<feature type="chain" id="PRO_0000435735" description="Stromal processing peptidase, chloroplastic">
    <location>
        <begin position="137"/>
        <end position="1246"/>
    </location>
</feature>
<feature type="active site" description="Proton acceptor" evidence="1">
    <location>
        <position position="231"/>
    </location>
</feature>
<feature type="active site" evidence="2">
    <location>
        <position position="302"/>
    </location>
</feature>
<feature type="binding site" evidence="1">
    <location>
        <position position="228"/>
    </location>
    <ligand>
        <name>Zn(2+)</name>
        <dbReference type="ChEBI" id="CHEBI:29105"/>
    </ligand>
</feature>
<feature type="binding site" evidence="1">
    <location>
        <position position="232"/>
    </location>
    <ligand>
        <name>Zn(2+)</name>
        <dbReference type="ChEBI" id="CHEBI:29105"/>
    </ligand>
</feature>
<feature type="binding site" evidence="2">
    <location>
        <position position="309"/>
    </location>
    <ligand>
        <name>Zn(2+)</name>
        <dbReference type="ChEBI" id="CHEBI:29105"/>
    </ligand>
</feature>
<feature type="splice variant" id="VSP_058158" description="In isoform 2.">
    <location>
        <begin position="146"/>
        <end position="403"/>
    </location>
</feature>
<sequence>MASFPSPPLAAAAAAAPPRLAPGLPLAAAAVRRPSSLARRSSIALAAPANPLRCIHRRAVSPRLRRRTEAVGAASAAIGSLGEEREGCLSCFPRGRRRGRPGLARFAPCALPHTYGLSSLHSGLTGAKIRRRHVLHAAGPDEPHVASPTWSETALDKHYVDQPIGKEELEGFLNTPLPSHPKLVRGQLKNGLRYLILPNKVPANRFEAHMEVHVGSIDEEEDEQGIAHMIEHVAFLGSKKREKLLGTGARSNAYTDFHHTVFHIHSPTKTKEYGEDLLPSVLDALNEIAFHPKFSSSRVEKERRAILSELQMMNTIEYRVDCQLLQHLHSENKLSERFPIGLEEQIHKWDPDKIRRFHERWYYPANATLYLVGEIDDIPRAIREIEAVFEHTLPEGEAAPMSTASPFGAMASLFAPKLPGGLAASLTGERSPAADKIKPVKRERQAIRPPVEHKWSLPGVAQDAKPPAIFQHELIQSFSINMFCKIPVNQVQTYKDLRSVLMKRIFLSALHFRINTRYKSSNPPFTSVELDHSDSGREGCTVTTLTVTAEPQNWRSAIKVAVHEVRRLKEFGVTMGEMTRYMDALIKDSEQLAMMIDSVPSVDNLDFIMESDALRHTVMDQLQGHESLLAVAETVTLEEVNTVGAEVLEFISDYGKPDAPLPAAIVACVPKKVHMDGVGETDFEIHPEEITDSIKAGLEEPIYPEPELEVPKELITRSELEDLKLQRKPSFASLSKEENVVKIFDDETGIAQRRLSNGISINYKITQNEARVGVMRLIVGGGRATEDSESKGSVIVGVRTLSEGGCVGNFSREQVELFCVNNLINCSLESNEEFIFMEFRFALRDNGMRAAFQLLHMVLEHNVWLEDAFDRATQLYLSYYRSIPKSLERSTAHKLMLAMLNHDERFVEPSPHSLQKLTLQSVKDAVMNQFVGDNMEVSIVGDFTEEEVESCVLDYLGTVSAPKSSKTQEHIEKISFLPFPSDLHFQQVYIKDTDERACAYIAGPAPNRWGFATEGNDLFNVIRSSSGDAQVSESANTDLTERKHNDVRSHSLFFGITLSLLAEIINSRLFTTVRDSMGLTYDVSFELNLFDKLDLGWYVIAVTSTPSKVHKAVDACKGVLRGLHSNKIVERELDRAKRTLLMKHEAETKTNAYWLGLLAHLQSSSVPRKEISCIKELTMLYESATIEDLYLAYEHLKVDESSLFACIGIAGAESGEETTDDELDMGLHGMGPIGGRGLSTMTRPTT</sequence>
<name>SPP_ORYSJ</name>
<keyword id="KW-0025">Alternative splicing</keyword>
<keyword id="KW-0150">Chloroplast</keyword>
<keyword id="KW-0378">Hydrolase</keyword>
<keyword id="KW-0479">Metal-binding</keyword>
<keyword id="KW-0482">Metalloprotease</keyword>
<keyword id="KW-0934">Plastid</keyword>
<keyword id="KW-0645">Protease</keyword>
<keyword id="KW-1185">Reference proteome</keyword>
<keyword id="KW-0809">Transit peptide</keyword>
<keyword id="KW-0862">Zinc</keyword>
<protein>
    <recommendedName>
        <fullName evidence="2">Stromal processing peptidase, chloroplastic</fullName>
        <ecNumber evidence="1">3.4.24.-</ecNumber>
    </recommendedName>
</protein>
<dbReference type="EC" id="3.4.24.-" evidence="1"/>
<dbReference type="EMBL" id="AP004680">
    <property type="protein sequence ID" value="BAD35692.1"/>
    <property type="status" value="ALT_SEQ"/>
    <property type="molecule type" value="Genomic_DNA"/>
</dbReference>
<dbReference type="EMBL" id="AP004737">
    <property type="protein sequence ID" value="BAD37737.1"/>
    <property type="status" value="ALT_SEQ"/>
    <property type="molecule type" value="Genomic_DNA"/>
</dbReference>
<dbReference type="EMBL" id="AP008212">
    <property type="protein sequence ID" value="BAF20026.1"/>
    <property type="status" value="ALT_SEQ"/>
    <property type="molecule type" value="Genomic_DNA"/>
</dbReference>
<dbReference type="EMBL" id="AP014962">
    <property type="protein sequence ID" value="BAS98693.1"/>
    <property type="status" value="ALT_SEQ"/>
    <property type="molecule type" value="Genomic_DNA"/>
</dbReference>
<dbReference type="EMBL" id="AP014962">
    <property type="protein sequence ID" value="BAS98694.1"/>
    <property type="status" value="ALT_SEQ"/>
    <property type="molecule type" value="Genomic_DNA"/>
</dbReference>
<dbReference type="EMBL" id="CM000143">
    <property type="protein sequence ID" value="EEE66044.1"/>
    <property type="status" value="ALT_SEQ"/>
    <property type="molecule type" value="Genomic_DNA"/>
</dbReference>
<dbReference type="EMBL" id="AK066566">
    <property type="protein sequence ID" value="BAG90033.1"/>
    <property type="molecule type" value="mRNA"/>
</dbReference>
<dbReference type="RefSeq" id="XP_015643311.1">
    <molecule id="Q69TY5-1"/>
    <property type="nucleotide sequence ID" value="XM_015787825.1"/>
</dbReference>
<dbReference type="SMR" id="Q69TY5"/>
<dbReference type="FunCoup" id="Q69TY5">
    <property type="interactions" value="937"/>
</dbReference>
<dbReference type="STRING" id="39947.Q69TY5"/>
<dbReference type="MEROPS" id="M16.004"/>
<dbReference type="PaxDb" id="39947-Q69TY5"/>
<dbReference type="EnsemblPlants" id="Os06t0625400-03">
    <molecule id="Q69TY5-1"/>
    <property type="protein sequence ID" value="Os06t0625400-03"/>
    <property type="gene ID" value="Os06g0625400"/>
</dbReference>
<dbReference type="Gramene" id="Os06t0625400-03">
    <molecule id="Q69TY5-1"/>
    <property type="protein sequence ID" value="Os06t0625400-03"/>
    <property type="gene ID" value="Os06g0625400"/>
</dbReference>
<dbReference type="KEGG" id="dosa:Os06g0625400"/>
<dbReference type="KEGG" id="osa:4341569"/>
<dbReference type="eggNOG" id="KOG0959">
    <property type="taxonomic scope" value="Eukaryota"/>
</dbReference>
<dbReference type="InParanoid" id="Q69TY5"/>
<dbReference type="OrthoDB" id="952271at2759"/>
<dbReference type="Proteomes" id="UP000000763">
    <property type="component" value="Chromosome 6"/>
</dbReference>
<dbReference type="Proteomes" id="UP000007752">
    <property type="component" value="Chromosome 6"/>
</dbReference>
<dbReference type="Proteomes" id="UP000059680">
    <property type="component" value="Chromosome 6"/>
</dbReference>
<dbReference type="GO" id="GO:0009570">
    <property type="term" value="C:chloroplast stroma"/>
    <property type="evidence" value="ECO:0007669"/>
    <property type="project" value="UniProtKB-SubCell"/>
</dbReference>
<dbReference type="GO" id="GO:0046872">
    <property type="term" value="F:metal ion binding"/>
    <property type="evidence" value="ECO:0007669"/>
    <property type="project" value="UniProtKB-KW"/>
</dbReference>
<dbReference type="GO" id="GO:0008237">
    <property type="term" value="F:metallopeptidase activity"/>
    <property type="evidence" value="ECO:0007669"/>
    <property type="project" value="UniProtKB-KW"/>
</dbReference>
<dbReference type="GO" id="GO:0003729">
    <property type="term" value="F:mRNA binding"/>
    <property type="evidence" value="ECO:0007669"/>
    <property type="project" value="EnsemblPlants"/>
</dbReference>
<dbReference type="GO" id="GO:0009793">
    <property type="term" value="P:embryo development ending in seed dormancy"/>
    <property type="evidence" value="ECO:0007669"/>
    <property type="project" value="EnsemblPlants"/>
</dbReference>
<dbReference type="GO" id="GO:0006508">
    <property type="term" value="P:proteolysis"/>
    <property type="evidence" value="ECO:0007669"/>
    <property type="project" value="UniProtKB-KW"/>
</dbReference>
<dbReference type="FunFam" id="3.30.830.10:FF:000024">
    <property type="entry name" value="Stromal processing peptidase chloroplastic"/>
    <property type="match status" value="1"/>
</dbReference>
<dbReference type="FunFam" id="3.30.830.10:FF:000025">
    <property type="entry name" value="Stromal processing peptidase chloroplastic"/>
    <property type="match status" value="1"/>
</dbReference>
<dbReference type="FunFam" id="3.30.830.10:FF:000033">
    <property type="entry name" value="Stromal processing peptidase, chloroplastic"/>
    <property type="match status" value="1"/>
</dbReference>
<dbReference type="FunFam" id="3.30.830.10:FF:000040">
    <property type="entry name" value="Stromal processing peptidase, chloroplastic"/>
    <property type="match status" value="1"/>
</dbReference>
<dbReference type="Gene3D" id="3.30.830.10">
    <property type="entry name" value="Metalloenzyme, LuxS/M16 peptidase-like"/>
    <property type="match status" value="4"/>
</dbReference>
<dbReference type="InterPro" id="IPR011249">
    <property type="entry name" value="Metalloenz_LuxS/M16"/>
</dbReference>
<dbReference type="InterPro" id="IPR011765">
    <property type="entry name" value="Pept_M16_N"/>
</dbReference>
<dbReference type="InterPro" id="IPR050626">
    <property type="entry name" value="Peptidase_M16"/>
</dbReference>
<dbReference type="InterPro" id="IPR007863">
    <property type="entry name" value="Peptidase_M16_C"/>
</dbReference>
<dbReference type="PANTHER" id="PTHR43690">
    <property type="entry name" value="NARDILYSIN"/>
    <property type="match status" value="1"/>
</dbReference>
<dbReference type="PANTHER" id="PTHR43690:SF33">
    <property type="entry name" value="STROMAL PROCESSING PEPTIDASE, CHLOROPLASTIC"/>
    <property type="match status" value="1"/>
</dbReference>
<dbReference type="Pfam" id="PF00675">
    <property type="entry name" value="Peptidase_M16"/>
    <property type="match status" value="1"/>
</dbReference>
<dbReference type="Pfam" id="PF05193">
    <property type="entry name" value="Peptidase_M16_C"/>
    <property type="match status" value="2"/>
</dbReference>
<dbReference type="SUPFAM" id="SSF63411">
    <property type="entry name" value="LuxS/MPP-like metallohydrolase"/>
    <property type="match status" value="3"/>
</dbReference>
<proteinExistence type="evidence at transcript level"/>
<gene>
    <name evidence="2" type="primary">SPP</name>
    <name evidence="5 6" type="ordered locus">Os06g0625400</name>
    <name evidence="2" type="ordered locus">LOC_Os06g41990</name>
    <name evidence="3" type="ORF">OSJNBa0029G06.38-1</name>
    <name evidence="4" type="ORF">OSJNBa0072A21.7-1</name>
</gene>
<evidence type="ECO:0000250" key="1">
    <source>
        <dbReference type="UniProtKB" id="Q40983"/>
    </source>
</evidence>
<evidence type="ECO:0000305" key="2"/>
<evidence type="ECO:0000312" key="3">
    <source>
        <dbReference type="EMBL" id="BAD35692.1"/>
    </source>
</evidence>
<evidence type="ECO:0000312" key="4">
    <source>
        <dbReference type="EMBL" id="BAD37737.1"/>
    </source>
</evidence>
<evidence type="ECO:0000312" key="5">
    <source>
        <dbReference type="EMBL" id="BAF20026.1"/>
    </source>
</evidence>
<evidence type="ECO:0000312" key="6">
    <source>
        <dbReference type="EMBL" id="BAS98693.1"/>
    </source>
</evidence>